<proteinExistence type="inferred from homology"/>
<keyword id="KW-0210">Decarboxylase</keyword>
<keyword id="KW-0456">Lyase</keyword>
<keyword id="KW-0665">Pyrimidine biosynthesis</keyword>
<accession>B7LRZ7</accession>
<evidence type="ECO:0000255" key="1">
    <source>
        <dbReference type="HAMAP-Rule" id="MF_01200"/>
    </source>
</evidence>
<gene>
    <name evidence="1" type="primary">pyrF</name>
    <name type="ordered locus">EFER_1673</name>
</gene>
<comment type="function">
    <text evidence="1">Catalyzes the decarboxylation of orotidine 5'-monophosphate (OMP) to uridine 5'-monophosphate (UMP).</text>
</comment>
<comment type="catalytic activity">
    <reaction evidence="1">
        <text>orotidine 5'-phosphate + H(+) = UMP + CO2</text>
        <dbReference type="Rhea" id="RHEA:11596"/>
        <dbReference type="ChEBI" id="CHEBI:15378"/>
        <dbReference type="ChEBI" id="CHEBI:16526"/>
        <dbReference type="ChEBI" id="CHEBI:57538"/>
        <dbReference type="ChEBI" id="CHEBI:57865"/>
        <dbReference type="EC" id="4.1.1.23"/>
    </reaction>
</comment>
<comment type="pathway">
    <text evidence="1">Pyrimidine metabolism; UMP biosynthesis via de novo pathway; UMP from orotate: step 2/2.</text>
</comment>
<comment type="subunit">
    <text evidence="1">Homodimer.</text>
</comment>
<comment type="similarity">
    <text evidence="1">Belongs to the OMP decarboxylase family. Type 1 subfamily.</text>
</comment>
<protein>
    <recommendedName>
        <fullName evidence="1">Orotidine 5'-phosphate decarboxylase</fullName>
        <ecNumber evidence="1">4.1.1.23</ecNumber>
    </recommendedName>
    <alternativeName>
        <fullName evidence="1">OMP decarboxylase</fullName>
        <shortName evidence="1">OMPDCase</shortName>
        <shortName evidence="1">OMPdecase</shortName>
    </alternativeName>
</protein>
<dbReference type="EC" id="4.1.1.23" evidence="1"/>
<dbReference type="EMBL" id="CU928158">
    <property type="protein sequence ID" value="CAQ89189.1"/>
    <property type="molecule type" value="Genomic_DNA"/>
</dbReference>
<dbReference type="RefSeq" id="WP_000204706.1">
    <property type="nucleotide sequence ID" value="NC_011740.1"/>
</dbReference>
<dbReference type="SMR" id="B7LRZ7"/>
<dbReference type="GeneID" id="75057290"/>
<dbReference type="KEGG" id="efe:EFER_1673"/>
<dbReference type="HOGENOM" id="CLU_067069_0_0_6"/>
<dbReference type="OrthoDB" id="9806203at2"/>
<dbReference type="UniPathway" id="UPA00070">
    <property type="reaction ID" value="UER00120"/>
</dbReference>
<dbReference type="Proteomes" id="UP000000745">
    <property type="component" value="Chromosome"/>
</dbReference>
<dbReference type="GO" id="GO:0005829">
    <property type="term" value="C:cytosol"/>
    <property type="evidence" value="ECO:0007669"/>
    <property type="project" value="TreeGrafter"/>
</dbReference>
<dbReference type="GO" id="GO:0004590">
    <property type="term" value="F:orotidine-5'-phosphate decarboxylase activity"/>
    <property type="evidence" value="ECO:0007669"/>
    <property type="project" value="UniProtKB-UniRule"/>
</dbReference>
<dbReference type="GO" id="GO:0006207">
    <property type="term" value="P:'de novo' pyrimidine nucleobase biosynthetic process"/>
    <property type="evidence" value="ECO:0007669"/>
    <property type="project" value="InterPro"/>
</dbReference>
<dbReference type="GO" id="GO:0044205">
    <property type="term" value="P:'de novo' UMP biosynthetic process"/>
    <property type="evidence" value="ECO:0007669"/>
    <property type="project" value="UniProtKB-UniRule"/>
</dbReference>
<dbReference type="CDD" id="cd04725">
    <property type="entry name" value="OMP_decarboxylase_like"/>
    <property type="match status" value="1"/>
</dbReference>
<dbReference type="FunFam" id="3.20.20.70:FF:000015">
    <property type="entry name" value="Orotidine 5'-phosphate decarboxylase"/>
    <property type="match status" value="1"/>
</dbReference>
<dbReference type="Gene3D" id="3.20.20.70">
    <property type="entry name" value="Aldolase class I"/>
    <property type="match status" value="1"/>
</dbReference>
<dbReference type="HAMAP" id="MF_01200_B">
    <property type="entry name" value="OMPdecase_type1_B"/>
    <property type="match status" value="1"/>
</dbReference>
<dbReference type="InterPro" id="IPR013785">
    <property type="entry name" value="Aldolase_TIM"/>
</dbReference>
<dbReference type="InterPro" id="IPR014732">
    <property type="entry name" value="OMPdecase"/>
</dbReference>
<dbReference type="InterPro" id="IPR018089">
    <property type="entry name" value="OMPdecase_AS"/>
</dbReference>
<dbReference type="InterPro" id="IPR047596">
    <property type="entry name" value="OMPdecase_bac"/>
</dbReference>
<dbReference type="InterPro" id="IPR001754">
    <property type="entry name" value="OMPdeCOase_dom"/>
</dbReference>
<dbReference type="InterPro" id="IPR011060">
    <property type="entry name" value="RibuloseP-bd_barrel"/>
</dbReference>
<dbReference type="NCBIfam" id="NF001273">
    <property type="entry name" value="PRK00230.1"/>
    <property type="match status" value="1"/>
</dbReference>
<dbReference type="NCBIfam" id="TIGR01740">
    <property type="entry name" value="pyrF"/>
    <property type="match status" value="1"/>
</dbReference>
<dbReference type="PANTHER" id="PTHR32119">
    <property type="entry name" value="OROTIDINE 5'-PHOSPHATE DECARBOXYLASE"/>
    <property type="match status" value="1"/>
</dbReference>
<dbReference type="PANTHER" id="PTHR32119:SF2">
    <property type="entry name" value="OROTIDINE 5'-PHOSPHATE DECARBOXYLASE"/>
    <property type="match status" value="1"/>
</dbReference>
<dbReference type="Pfam" id="PF00215">
    <property type="entry name" value="OMPdecase"/>
    <property type="match status" value="1"/>
</dbReference>
<dbReference type="SMART" id="SM00934">
    <property type="entry name" value="OMPdecase"/>
    <property type="match status" value="1"/>
</dbReference>
<dbReference type="SUPFAM" id="SSF51366">
    <property type="entry name" value="Ribulose-phoshate binding barrel"/>
    <property type="match status" value="1"/>
</dbReference>
<dbReference type="PROSITE" id="PS00156">
    <property type="entry name" value="OMPDECASE"/>
    <property type="match status" value="1"/>
</dbReference>
<name>PYRF_ESCF3</name>
<feature type="chain" id="PRO_1000138529" description="Orotidine 5'-phosphate decarboxylase">
    <location>
        <begin position="1"/>
        <end position="245"/>
    </location>
</feature>
<feature type="active site" description="Proton donor" evidence="1">
    <location>
        <position position="73"/>
    </location>
</feature>
<feature type="binding site" evidence="1">
    <location>
        <position position="22"/>
    </location>
    <ligand>
        <name>substrate</name>
    </ligand>
</feature>
<feature type="binding site" evidence="1">
    <location>
        <position position="44"/>
    </location>
    <ligand>
        <name>substrate</name>
    </ligand>
</feature>
<feature type="binding site" evidence="1">
    <location>
        <begin position="71"/>
        <end position="80"/>
    </location>
    <ligand>
        <name>substrate</name>
    </ligand>
</feature>
<feature type="binding site" evidence="1">
    <location>
        <position position="131"/>
    </location>
    <ligand>
        <name>substrate</name>
    </ligand>
</feature>
<feature type="binding site" evidence="1">
    <location>
        <position position="192"/>
    </location>
    <ligand>
        <name>substrate</name>
    </ligand>
</feature>
<feature type="binding site" evidence="1">
    <location>
        <position position="201"/>
    </location>
    <ligand>
        <name>substrate</name>
    </ligand>
</feature>
<feature type="binding site" evidence="1">
    <location>
        <position position="221"/>
    </location>
    <ligand>
        <name>substrate</name>
    </ligand>
</feature>
<feature type="binding site" evidence="1">
    <location>
        <position position="222"/>
    </location>
    <ligand>
        <name>substrate</name>
    </ligand>
</feature>
<sequence length="245" mass="26215">MTSTASSSSRIVTDSPIVVALDYHNRENALAFVDKIDPRDCRLKVGKEMFTLFGPQFVRELQQRGFDIFLDLKFHDIPNTAAHAVAAAADLGVWMVNVHASGGARMMTAAREALLPFGKDAPLLIAVTVLTSMEASDLADLGVTVSPAQYAERLAGLTQKCGLDGVVCSAQEAVRFKQAFGEDFKLVTPGIRPQGSAAGDQRRIMTPEQALAAGVDYMVIGRPVTQSEDPAQTLKTINASLKGHG</sequence>
<organism>
    <name type="scientific">Escherichia fergusonii (strain ATCC 35469 / DSM 13698 / CCUG 18766 / IAM 14443 / JCM 21226 / LMG 7866 / NBRC 102419 / NCTC 12128 / CDC 0568-73)</name>
    <dbReference type="NCBI Taxonomy" id="585054"/>
    <lineage>
        <taxon>Bacteria</taxon>
        <taxon>Pseudomonadati</taxon>
        <taxon>Pseudomonadota</taxon>
        <taxon>Gammaproteobacteria</taxon>
        <taxon>Enterobacterales</taxon>
        <taxon>Enterobacteriaceae</taxon>
        <taxon>Escherichia</taxon>
    </lineage>
</organism>
<reference key="1">
    <citation type="journal article" date="2009" name="PLoS Genet.">
        <title>Organised genome dynamics in the Escherichia coli species results in highly diverse adaptive paths.</title>
        <authorList>
            <person name="Touchon M."/>
            <person name="Hoede C."/>
            <person name="Tenaillon O."/>
            <person name="Barbe V."/>
            <person name="Baeriswyl S."/>
            <person name="Bidet P."/>
            <person name="Bingen E."/>
            <person name="Bonacorsi S."/>
            <person name="Bouchier C."/>
            <person name="Bouvet O."/>
            <person name="Calteau A."/>
            <person name="Chiapello H."/>
            <person name="Clermont O."/>
            <person name="Cruveiller S."/>
            <person name="Danchin A."/>
            <person name="Diard M."/>
            <person name="Dossat C."/>
            <person name="Karoui M.E."/>
            <person name="Frapy E."/>
            <person name="Garry L."/>
            <person name="Ghigo J.M."/>
            <person name="Gilles A.M."/>
            <person name="Johnson J."/>
            <person name="Le Bouguenec C."/>
            <person name="Lescat M."/>
            <person name="Mangenot S."/>
            <person name="Martinez-Jehanne V."/>
            <person name="Matic I."/>
            <person name="Nassif X."/>
            <person name="Oztas S."/>
            <person name="Petit M.A."/>
            <person name="Pichon C."/>
            <person name="Rouy Z."/>
            <person name="Ruf C.S."/>
            <person name="Schneider D."/>
            <person name="Tourret J."/>
            <person name="Vacherie B."/>
            <person name="Vallenet D."/>
            <person name="Medigue C."/>
            <person name="Rocha E.P.C."/>
            <person name="Denamur E."/>
        </authorList>
    </citation>
    <scope>NUCLEOTIDE SEQUENCE [LARGE SCALE GENOMIC DNA]</scope>
    <source>
        <strain>ATCC 35469 / DSM 13698 / BCRC 15582 / CCUG 18766 / IAM 14443 / JCM 21226 / LMG 7866 / NBRC 102419 / NCTC 12128 / CDC 0568-73</strain>
    </source>
</reference>